<dbReference type="EMBL" id="AP006715">
    <property type="protein sequence ID" value="BAE92465.1"/>
    <property type="molecule type" value="Genomic_DNA"/>
</dbReference>
<dbReference type="RefSeq" id="YP_537022.1">
    <property type="nucleotide sequence ID" value="NC_007932.1"/>
</dbReference>
<dbReference type="SMR" id="Q1XDE6"/>
<dbReference type="GeneID" id="3978897"/>
<dbReference type="GO" id="GO:0009535">
    <property type="term" value="C:chloroplast thylakoid membrane"/>
    <property type="evidence" value="ECO:0007669"/>
    <property type="project" value="UniProtKB-SubCell"/>
</dbReference>
<dbReference type="GO" id="GO:0045158">
    <property type="term" value="F:electron transporter, transferring electrons within cytochrome b6/f complex of photosystem II activity"/>
    <property type="evidence" value="ECO:0007669"/>
    <property type="project" value="UniProtKB-UniRule"/>
</dbReference>
<dbReference type="GO" id="GO:0046872">
    <property type="term" value="F:metal ion binding"/>
    <property type="evidence" value="ECO:0007669"/>
    <property type="project" value="UniProtKB-KW"/>
</dbReference>
<dbReference type="GO" id="GO:0016491">
    <property type="term" value="F:oxidoreductase activity"/>
    <property type="evidence" value="ECO:0007669"/>
    <property type="project" value="InterPro"/>
</dbReference>
<dbReference type="GO" id="GO:0015979">
    <property type="term" value="P:photosynthesis"/>
    <property type="evidence" value="ECO:0007669"/>
    <property type="project" value="UniProtKB-UniRule"/>
</dbReference>
<dbReference type="GO" id="GO:0022904">
    <property type="term" value="P:respiratory electron transport chain"/>
    <property type="evidence" value="ECO:0007669"/>
    <property type="project" value="InterPro"/>
</dbReference>
<dbReference type="CDD" id="cd00284">
    <property type="entry name" value="Cytochrome_b_N"/>
    <property type="match status" value="1"/>
</dbReference>
<dbReference type="FunFam" id="1.20.810.10:FF:000001">
    <property type="entry name" value="Cytochrome b6"/>
    <property type="match status" value="1"/>
</dbReference>
<dbReference type="Gene3D" id="1.20.810.10">
    <property type="entry name" value="Cytochrome Bc1 Complex, Chain C"/>
    <property type="match status" value="1"/>
</dbReference>
<dbReference type="HAMAP" id="MF_00633">
    <property type="entry name" value="Cytb6_f_cytb6"/>
    <property type="match status" value="1"/>
</dbReference>
<dbReference type="InterPro" id="IPR005797">
    <property type="entry name" value="Cyt_b/b6_N"/>
</dbReference>
<dbReference type="InterPro" id="IPR023530">
    <property type="entry name" value="Cyt_B6_PetB"/>
</dbReference>
<dbReference type="InterPro" id="IPR027387">
    <property type="entry name" value="Cytb/b6-like_sf"/>
</dbReference>
<dbReference type="InterPro" id="IPR048259">
    <property type="entry name" value="Cytochrome_b_N_euk/bac"/>
</dbReference>
<dbReference type="InterPro" id="IPR016174">
    <property type="entry name" value="Di-haem_cyt_TM"/>
</dbReference>
<dbReference type="NCBIfam" id="NF002990">
    <property type="entry name" value="PRK03735.1"/>
    <property type="match status" value="1"/>
</dbReference>
<dbReference type="PANTHER" id="PTHR19271">
    <property type="entry name" value="CYTOCHROME B"/>
    <property type="match status" value="1"/>
</dbReference>
<dbReference type="PANTHER" id="PTHR19271:SF16">
    <property type="entry name" value="CYTOCHROME B"/>
    <property type="match status" value="1"/>
</dbReference>
<dbReference type="Pfam" id="PF00033">
    <property type="entry name" value="Cytochrome_B"/>
    <property type="match status" value="1"/>
</dbReference>
<dbReference type="PIRSF" id="PIRSF000032">
    <property type="entry name" value="Cytochrome_b6"/>
    <property type="match status" value="1"/>
</dbReference>
<dbReference type="SUPFAM" id="SSF81342">
    <property type="entry name" value="Transmembrane di-heme cytochromes"/>
    <property type="match status" value="1"/>
</dbReference>
<dbReference type="PROSITE" id="PS51002">
    <property type="entry name" value="CYTB_NTER"/>
    <property type="match status" value="1"/>
</dbReference>
<geneLocation type="chloroplast"/>
<organism>
    <name type="scientific">Pyropia yezoensis</name>
    <name type="common">Susabi-nori</name>
    <name type="synonym">Porphyra yezoensis</name>
    <dbReference type="NCBI Taxonomy" id="2788"/>
    <lineage>
        <taxon>Eukaryota</taxon>
        <taxon>Rhodophyta</taxon>
        <taxon>Bangiophyceae</taxon>
        <taxon>Bangiales</taxon>
        <taxon>Bangiaceae</taxon>
        <taxon>Pyropia</taxon>
    </lineage>
</organism>
<proteinExistence type="inferred from homology"/>
<evidence type="ECO:0000255" key="1">
    <source>
        <dbReference type="HAMAP-Rule" id="MF_00633"/>
    </source>
</evidence>
<accession>Q1XDE6</accession>
<name>CYB6_PYRYE</name>
<keyword id="KW-0150">Chloroplast</keyword>
<keyword id="KW-0249">Electron transport</keyword>
<keyword id="KW-0349">Heme</keyword>
<keyword id="KW-0408">Iron</keyword>
<keyword id="KW-0472">Membrane</keyword>
<keyword id="KW-0479">Metal-binding</keyword>
<keyword id="KW-0602">Photosynthesis</keyword>
<keyword id="KW-0934">Plastid</keyword>
<keyword id="KW-0793">Thylakoid</keyword>
<keyword id="KW-0812">Transmembrane</keyword>
<keyword id="KW-1133">Transmembrane helix</keyword>
<keyword id="KW-0813">Transport</keyword>
<protein>
    <recommendedName>
        <fullName evidence="1">Cytochrome b6</fullName>
    </recommendedName>
</protein>
<feature type="chain" id="PRO_0000275342" description="Cytochrome b6">
    <location>
        <begin position="1"/>
        <end position="215"/>
    </location>
</feature>
<feature type="transmembrane region" description="Helical" evidence="1">
    <location>
        <begin position="32"/>
        <end position="52"/>
    </location>
</feature>
<feature type="transmembrane region" description="Helical" evidence="1">
    <location>
        <begin position="90"/>
        <end position="110"/>
    </location>
</feature>
<feature type="transmembrane region" description="Helical" evidence="1">
    <location>
        <begin position="116"/>
        <end position="136"/>
    </location>
</feature>
<feature type="transmembrane region" description="Helical" evidence="1">
    <location>
        <begin position="186"/>
        <end position="206"/>
    </location>
</feature>
<feature type="binding site" description="covalent" evidence="1">
    <location>
        <position position="35"/>
    </location>
    <ligand>
        <name>heme c</name>
        <dbReference type="ChEBI" id="CHEBI:61717"/>
    </ligand>
</feature>
<feature type="binding site" description="axial binding residue" evidence="1">
    <location>
        <position position="86"/>
    </location>
    <ligand>
        <name>heme b</name>
        <dbReference type="ChEBI" id="CHEBI:60344"/>
        <label>2</label>
    </ligand>
    <ligandPart>
        <name>Fe</name>
        <dbReference type="ChEBI" id="CHEBI:18248"/>
    </ligandPart>
</feature>
<feature type="binding site" description="axial binding residue" evidence="1">
    <location>
        <position position="100"/>
    </location>
    <ligand>
        <name>heme b</name>
        <dbReference type="ChEBI" id="CHEBI:60344"/>
        <label>1</label>
    </ligand>
    <ligandPart>
        <name>Fe</name>
        <dbReference type="ChEBI" id="CHEBI:18248"/>
    </ligandPart>
</feature>
<feature type="binding site" description="axial binding residue" evidence="1">
    <location>
        <position position="187"/>
    </location>
    <ligand>
        <name>heme b</name>
        <dbReference type="ChEBI" id="CHEBI:60344"/>
        <label>2</label>
    </ligand>
    <ligandPart>
        <name>Fe</name>
        <dbReference type="ChEBI" id="CHEBI:18248"/>
    </ligandPart>
</feature>
<feature type="binding site" description="axial binding residue" evidence="1">
    <location>
        <position position="202"/>
    </location>
    <ligand>
        <name>heme b</name>
        <dbReference type="ChEBI" id="CHEBI:60344"/>
        <label>1</label>
    </ligand>
    <ligandPart>
        <name>Fe</name>
        <dbReference type="ChEBI" id="CHEBI:18248"/>
    </ligandPart>
</feature>
<gene>
    <name evidence="1" type="primary">petB</name>
</gene>
<comment type="function">
    <text evidence="1">Component of the cytochrome b6-f complex, which mediates electron transfer between photosystem II (PSII) and photosystem I (PSI), cyclic electron flow around PSI, and state transitions.</text>
</comment>
<comment type="cofactor">
    <cofactor evidence="1">
        <name>heme b</name>
        <dbReference type="ChEBI" id="CHEBI:60344"/>
    </cofactor>
    <text evidence="1">Binds 2 heme b groups non-covalently with two histidine residues as axial ligands.</text>
</comment>
<comment type="cofactor">
    <cofactor evidence="1">
        <name>heme c</name>
        <dbReference type="ChEBI" id="CHEBI:61717"/>
    </cofactor>
    <text evidence="1">Binds one heme group covalently by a single cysteine link with no axial amino acid ligand. This heme was named heme ci.</text>
</comment>
<comment type="subunit">
    <text evidence="1">The 4 large subunits of the cytochrome b6-f complex are cytochrome b6, subunit IV (17 kDa polypeptide, PetD), cytochrome f and the Rieske protein, while the 4 small subunits are PetG, PetL, PetM and PetN. The complex functions as a dimer.</text>
</comment>
<comment type="subcellular location">
    <subcellularLocation>
        <location evidence="1">Plastid</location>
        <location evidence="1">Chloroplast thylakoid membrane</location>
        <topology evidence="1">Multi-pass membrane protein</topology>
    </subcellularLocation>
</comment>
<comment type="miscellaneous">
    <text evidence="1">Heme 1 (or BH or b566) is high-potential and absorbs at about 566 nm, and heme 2 (or BL or b562) is low-potential and absorbs at about 562 nm.</text>
</comment>
<comment type="similarity">
    <text evidence="1">Belongs to the cytochrome b family. PetB subfamily.</text>
</comment>
<reference key="1">
    <citation type="submission" date="2003-11" db="EMBL/GenBank/DDBJ databases">
        <title>Whole genome sequence of Porphyra yezoensis chloroplast.</title>
        <authorList>
            <person name="Kunimoto M."/>
            <person name="Morishima K."/>
            <person name="Yoshikawa M."/>
            <person name="Fukuda S."/>
            <person name="Kobayashi T."/>
            <person name="Kobayashi M."/>
            <person name="Okazaki T."/>
            <person name="Ohara I."/>
            <person name="Nakayama I."/>
        </authorList>
    </citation>
    <scope>NUCLEOTIDE SEQUENCE [LARGE SCALE GENOMIC DNA]</scope>
    <source>
        <strain>U-51</strain>
    </source>
</reference>
<sequence>MSKIYDWFEERLEIQAIADDISSKYVPPHVNIFYCLGGIVFVSFLIQVATGFAMTFYYRPTVAEAFTSVEYIMTDVNFGWLIRSIHRWSVSMMVLMMILHVFRVYLTGGFKKPRELTWVTGVILGVLTVSFGVTGYSLPWDQIGYWAVKIVTGVPDAVPVVGASIVELLRGGVSVGQGTLTRFYSLHTFVLPLLTAVFMLMHFLMIRKQGISGPL</sequence>